<organism>
    <name type="scientific">Salmonella schwarzengrund (strain CVM19633)</name>
    <dbReference type="NCBI Taxonomy" id="439843"/>
    <lineage>
        <taxon>Bacteria</taxon>
        <taxon>Pseudomonadati</taxon>
        <taxon>Pseudomonadota</taxon>
        <taxon>Gammaproteobacteria</taxon>
        <taxon>Enterobacterales</taxon>
        <taxon>Enterobacteriaceae</taxon>
        <taxon>Salmonella</taxon>
    </lineage>
</organism>
<dbReference type="EC" id="3.1.13.1" evidence="2"/>
<dbReference type="EMBL" id="CP001127">
    <property type="protein sequence ID" value="ACF91932.1"/>
    <property type="molecule type" value="Genomic_DNA"/>
</dbReference>
<dbReference type="RefSeq" id="WP_000485041.1">
    <property type="nucleotide sequence ID" value="NC_011094.1"/>
</dbReference>
<dbReference type="SMR" id="B4TX11"/>
<dbReference type="KEGG" id="sew:SeSA_A1830"/>
<dbReference type="HOGENOM" id="CLU_002333_7_3_6"/>
<dbReference type="Proteomes" id="UP000001865">
    <property type="component" value="Chromosome"/>
</dbReference>
<dbReference type="GO" id="GO:0005829">
    <property type="term" value="C:cytosol"/>
    <property type="evidence" value="ECO:0007669"/>
    <property type="project" value="TreeGrafter"/>
</dbReference>
<dbReference type="GO" id="GO:0008859">
    <property type="term" value="F:exoribonuclease II activity"/>
    <property type="evidence" value="ECO:0007669"/>
    <property type="project" value="UniProtKB-UniRule"/>
</dbReference>
<dbReference type="GO" id="GO:0003723">
    <property type="term" value="F:RNA binding"/>
    <property type="evidence" value="ECO:0007669"/>
    <property type="project" value="UniProtKB-KW"/>
</dbReference>
<dbReference type="GO" id="GO:0006402">
    <property type="term" value="P:mRNA catabolic process"/>
    <property type="evidence" value="ECO:0007669"/>
    <property type="project" value="UniProtKB-UniRule"/>
</dbReference>
<dbReference type="FunFam" id="2.40.50.140:FF:000079">
    <property type="entry name" value="Exoribonuclease 2"/>
    <property type="match status" value="1"/>
</dbReference>
<dbReference type="FunFam" id="2.40.50.140:FF:000081">
    <property type="entry name" value="Exoribonuclease 2"/>
    <property type="match status" value="1"/>
</dbReference>
<dbReference type="FunFam" id="2.40.50.640:FF:000001">
    <property type="entry name" value="Exoribonuclease 2"/>
    <property type="match status" value="1"/>
</dbReference>
<dbReference type="Gene3D" id="2.40.50.640">
    <property type="match status" value="1"/>
</dbReference>
<dbReference type="Gene3D" id="2.40.50.140">
    <property type="entry name" value="Nucleic acid-binding proteins"/>
    <property type="match status" value="2"/>
</dbReference>
<dbReference type="HAMAP" id="MF_01036">
    <property type="entry name" value="RNase_II"/>
    <property type="match status" value="1"/>
</dbReference>
<dbReference type="InterPro" id="IPR011129">
    <property type="entry name" value="CSD"/>
</dbReference>
<dbReference type="InterPro" id="IPR012340">
    <property type="entry name" value="NA-bd_OB-fold"/>
</dbReference>
<dbReference type="InterPro" id="IPR013223">
    <property type="entry name" value="RNase_B_OB_dom"/>
</dbReference>
<dbReference type="InterPro" id="IPR011804">
    <property type="entry name" value="RNase_II"/>
</dbReference>
<dbReference type="InterPro" id="IPR001900">
    <property type="entry name" value="RNase_II/R"/>
</dbReference>
<dbReference type="InterPro" id="IPR022966">
    <property type="entry name" value="RNase_II/R_CS"/>
</dbReference>
<dbReference type="InterPro" id="IPR004476">
    <property type="entry name" value="RNase_II/RNase_R"/>
</dbReference>
<dbReference type="InterPro" id="IPR050180">
    <property type="entry name" value="RNR_Ribonuclease"/>
</dbReference>
<dbReference type="InterPro" id="IPR003029">
    <property type="entry name" value="S1_domain"/>
</dbReference>
<dbReference type="NCBIfam" id="TIGR00358">
    <property type="entry name" value="3_prime_RNase"/>
    <property type="match status" value="1"/>
</dbReference>
<dbReference type="NCBIfam" id="NF003455">
    <property type="entry name" value="PRK05054.1"/>
    <property type="match status" value="1"/>
</dbReference>
<dbReference type="NCBIfam" id="TIGR02062">
    <property type="entry name" value="RNase_B"/>
    <property type="match status" value="1"/>
</dbReference>
<dbReference type="PANTHER" id="PTHR23355:SF37">
    <property type="entry name" value="EXORIBONUCLEASE 2"/>
    <property type="match status" value="1"/>
</dbReference>
<dbReference type="PANTHER" id="PTHR23355">
    <property type="entry name" value="RIBONUCLEASE"/>
    <property type="match status" value="1"/>
</dbReference>
<dbReference type="Pfam" id="PF08206">
    <property type="entry name" value="OB_RNB"/>
    <property type="match status" value="1"/>
</dbReference>
<dbReference type="Pfam" id="PF00773">
    <property type="entry name" value="RNB"/>
    <property type="match status" value="1"/>
</dbReference>
<dbReference type="Pfam" id="PF00575">
    <property type="entry name" value="S1"/>
    <property type="match status" value="1"/>
</dbReference>
<dbReference type="SMART" id="SM00357">
    <property type="entry name" value="CSP"/>
    <property type="match status" value="1"/>
</dbReference>
<dbReference type="SMART" id="SM00955">
    <property type="entry name" value="RNB"/>
    <property type="match status" value="1"/>
</dbReference>
<dbReference type="SUPFAM" id="SSF50249">
    <property type="entry name" value="Nucleic acid-binding proteins"/>
    <property type="match status" value="4"/>
</dbReference>
<dbReference type="PROSITE" id="PS01175">
    <property type="entry name" value="RIBONUCLEASE_II"/>
    <property type="match status" value="1"/>
</dbReference>
<accession>B4TX11</accession>
<feature type="chain" id="PRO_1000135880" description="Exoribonuclease 2">
    <location>
        <begin position="1"/>
        <end position="644"/>
    </location>
</feature>
<feature type="domain" description="RNB" evidence="1">
    <location>
        <begin position="189"/>
        <end position="516"/>
    </location>
</feature>
<feature type="domain" description="S1 motif" evidence="2">
    <location>
        <begin position="561"/>
        <end position="643"/>
    </location>
</feature>
<keyword id="KW-0963">Cytoplasm</keyword>
<keyword id="KW-0269">Exonuclease</keyword>
<keyword id="KW-0378">Hydrolase</keyword>
<keyword id="KW-0540">Nuclease</keyword>
<keyword id="KW-0694">RNA-binding</keyword>
<proteinExistence type="inferred from homology"/>
<protein>
    <recommendedName>
        <fullName evidence="2">Exoribonuclease 2</fullName>
        <ecNumber evidence="2">3.1.13.1</ecNumber>
    </recommendedName>
    <alternativeName>
        <fullName evidence="2">Exoribonuclease II</fullName>
        <shortName evidence="2">RNase II</shortName>
        <shortName evidence="2">Ribonuclease II</shortName>
    </alternativeName>
</protein>
<comment type="function">
    <text evidence="2">Involved in mRNA degradation. Hydrolyzes single-stranded polyribonucleotides processively in the 3' to 5' direction.</text>
</comment>
<comment type="catalytic activity">
    <reaction evidence="2">
        <text>Exonucleolytic cleavage in the 3'- to 5'-direction to yield nucleoside 5'-phosphates.</text>
        <dbReference type="EC" id="3.1.13.1"/>
    </reaction>
</comment>
<comment type="subcellular location">
    <subcellularLocation>
        <location evidence="2">Cytoplasm</location>
    </subcellularLocation>
</comment>
<comment type="similarity">
    <text evidence="2">Belongs to the RNR ribonuclease family. RNase II subfamily.</text>
</comment>
<gene>
    <name evidence="2" type="primary">rnb</name>
    <name type="ordered locus">SeSA_A1830</name>
</gene>
<name>RNB_SALSV</name>
<evidence type="ECO:0000255" key="1"/>
<evidence type="ECO:0000255" key="2">
    <source>
        <dbReference type="HAMAP-Rule" id="MF_01036"/>
    </source>
</evidence>
<reference key="1">
    <citation type="journal article" date="2011" name="J. Bacteriol.">
        <title>Comparative genomics of 28 Salmonella enterica isolates: evidence for CRISPR-mediated adaptive sublineage evolution.</title>
        <authorList>
            <person name="Fricke W.F."/>
            <person name="Mammel M.K."/>
            <person name="McDermott P.F."/>
            <person name="Tartera C."/>
            <person name="White D.G."/>
            <person name="Leclerc J.E."/>
            <person name="Ravel J."/>
            <person name="Cebula T.A."/>
        </authorList>
    </citation>
    <scope>NUCLEOTIDE SEQUENCE [LARGE SCALE GENOMIC DNA]</scope>
    <source>
        <strain>CVM19633</strain>
    </source>
</reference>
<sequence>MFQDNPLLAQLKQQLHSQTPRAEGVVKATEKGFGFLEVDAQKSYFIPPPQMKKVMHGDRIVAVIHTEKERESAEPEELIEPFLTRFVGKVQGKNDRLSIVPDHPLLKDAIPCRAARGVQHEFKEGDWAVAEMRRHPLKGDRSFYADLTQYITFADDHFVPWWVTLARHNLEKEAPNGVATEMLDEGLERQDLTALNFVTIDSASTEDMDDALYAEELADGRLQLTVAIADPTAWIAEGSKLDNAAKIRAFTNYLPGFNIPMLPRELSDDLCSLRANEVRPALACRMIIAADGTIDDDIAFFAATIESKAKLAYDNVSDWLENNGTWQPDNEGIAQQIRLLHRICLSRSEWRHHHALVFKDRPDYRFVLGEKGEVLDIVAEPRRIANRIVEESMIAANLCAARVLRDKLGFGIYNVHTGFDPANADALAALLKTHGLHVDAEEVLTLEGFCKLRRELDAQPSGFLDSRIRRFQSFAEISTEPGPHFGLGLEAYATWTSPIRKYGDMINHRLLKAVIKGEAIARPQEDITQQMAERRRLNRMAERDVGDWLYARFLNDKAGTNTRFAAEIIDVSRGGMRVRLVDNGAIAFIPAPFLHAVRDELVCSQENGTVQIKGETVYKVTDVIDVTIAEVRMETRSIIARPAA</sequence>